<feature type="peptide" id="PRO_0000423183" description="Kappa-actitoxin-Bcs3a" evidence="3">
    <location>
        <begin position="1"/>
        <end position="38"/>
    </location>
</feature>
<feature type="domain" description="ShKT" evidence="2">
    <location>
        <begin position="2"/>
        <end position="37"/>
    </location>
</feature>
<feature type="region of interest" description="Crucial for binding to potassium channels" evidence="1">
    <location>
        <begin position="25"/>
        <end position="26"/>
    </location>
</feature>
<feature type="site" description="Important for binding to potassium channels" evidence="1">
    <location>
        <position position="6"/>
    </location>
</feature>
<feature type="site" description="Important for binding to potassium channels" evidence="1">
    <location>
        <position position="13"/>
    </location>
</feature>
<feature type="site" description="Important for binding to potassium channels" evidence="1">
    <location>
        <position position="23"/>
    </location>
</feature>
<feature type="disulfide bond" evidence="1 2">
    <location>
        <begin position="2"/>
        <end position="37"/>
    </location>
</feature>
<feature type="disulfide bond" evidence="1 2">
    <location>
        <begin position="11"/>
        <end position="30"/>
    </location>
</feature>
<feature type="disulfide bond" evidence="1 2">
    <location>
        <begin position="20"/>
        <end position="34"/>
    </location>
</feature>
<protein>
    <recommendedName>
        <fullName evidence="5">Kappa-actitoxin-Bcs3a</fullName>
        <shortName evidence="5">Kappa-AITX-Bcs3a</shortName>
    </recommendedName>
    <alternativeName>
        <fullName evidence="4">Potassium channel toxin BcsTx1</fullName>
        <shortName evidence="4">BcsTx1</shortName>
    </alternativeName>
</protein>
<sequence>ACIDRFPTGTCKHVKKGGSCKNSQKYRINCAKTCGLCH</sequence>
<dbReference type="SMR" id="C0HJC2"/>
<dbReference type="GO" id="GO:0005576">
    <property type="term" value="C:extracellular region"/>
    <property type="evidence" value="ECO:0000314"/>
    <property type="project" value="UniProtKB"/>
</dbReference>
<dbReference type="GO" id="GO:0042151">
    <property type="term" value="C:nematocyst"/>
    <property type="evidence" value="ECO:0000303"/>
    <property type="project" value="UniProtKB"/>
</dbReference>
<dbReference type="GO" id="GO:0019870">
    <property type="term" value="F:potassium channel inhibitor activity"/>
    <property type="evidence" value="ECO:0000314"/>
    <property type="project" value="UniProtKB"/>
</dbReference>
<dbReference type="GO" id="GO:0090729">
    <property type="term" value="F:toxin activity"/>
    <property type="evidence" value="ECO:0007669"/>
    <property type="project" value="UniProtKB-KW"/>
</dbReference>
<dbReference type="GO" id="GO:0044562">
    <property type="term" value="P:envenomation resulting in negative regulation of voltage-gated potassium channel activity in another organism"/>
    <property type="evidence" value="ECO:0000314"/>
    <property type="project" value="UniProtKB"/>
</dbReference>
<dbReference type="Gene3D" id="1.10.10.1870">
    <property type="entry name" value="ShTK domain-like"/>
    <property type="match status" value="1"/>
</dbReference>
<dbReference type="InterPro" id="IPR003582">
    <property type="entry name" value="ShKT_dom"/>
</dbReference>
<dbReference type="Pfam" id="PF01549">
    <property type="entry name" value="ShK"/>
    <property type="match status" value="1"/>
</dbReference>
<dbReference type="SMART" id="SM00254">
    <property type="entry name" value="ShKT"/>
    <property type="match status" value="1"/>
</dbReference>
<dbReference type="SUPFAM" id="SSF57546">
    <property type="entry name" value="Crisp domain-like"/>
    <property type="match status" value="1"/>
</dbReference>
<dbReference type="PROSITE" id="PS51670">
    <property type="entry name" value="SHKT"/>
    <property type="match status" value="1"/>
</dbReference>
<evidence type="ECO:0000250" key="1">
    <source>
        <dbReference type="UniProtKB" id="P29186"/>
    </source>
</evidence>
<evidence type="ECO:0000255" key="2">
    <source>
        <dbReference type="PROSITE-ProRule" id="PRU01005"/>
    </source>
</evidence>
<evidence type="ECO:0000269" key="3">
    <source>
    </source>
</evidence>
<evidence type="ECO:0000303" key="4">
    <source>
    </source>
</evidence>
<evidence type="ECO:0000305" key="5"/>
<accession>C0HJC2</accession>
<name>K1B1_BUNCI</name>
<keyword id="KW-0903">Direct protein sequencing</keyword>
<keyword id="KW-1015">Disulfide bond</keyword>
<keyword id="KW-0872">Ion channel impairing toxin</keyword>
<keyword id="KW-0166">Nematocyst</keyword>
<keyword id="KW-0528">Neurotoxin</keyword>
<keyword id="KW-0632">Potassium channel impairing toxin</keyword>
<keyword id="KW-0964">Secreted</keyword>
<keyword id="KW-0800">Toxin</keyword>
<keyword id="KW-1220">Voltage-gated potassium channel impairing toxin</keyword>
<reference key="1">
    <citation type="journal article" date="2013" name="Mar. Drugs">
        <title>Biochemical and electrophysiological characterization of two sea anemone type 1 potassium toxins from a geographically distant population of Bunodosoma caissarum.</title>
        <authorList>
            <person name="Orts D.J."/>
            <person name="Peigneur S."/>
            <person name="Madio B."/>
            <person name="Cassoli J.S."/>
            <person name="Montandon G.G."/>
            <person name="Pimenta A.M."/>
            <person name="Bicudo J.E."/>
            <person name="Freitas J.C."/>
            <person name="Zaharenko A.J."/>
            <person name="Tytgat J."/>
        </authorList>
    </citation>
    <scope>PROTEIN SEQUENCE</scope>
    <scope>FUNCTION</scope>
    <scope>SUBCELLULAR LOCATION</scope>
    <scope>MASS SPECTROMETRY</scope>
</reference>
<organism>
    <name type="scientific">Bunodosoma caissarum</name>
    <name type="common">Sea anemone</name>
    <dbReference type="NCBI Taxonomy" id="31165"/>
    <lineage>
        <taxon>Eukaryota</taxon>
        <taxon>Metazoa</taxon>
        <taxon>Cnidaria</taxon>
        <taxon>Anthozoa</taxon>
        <taxon>Hexacorallia</taxon>
        <taxon>Actiniaria</taxon>
        <taxon>Actiniidae</taxon>
        <taxon>Bunodosoma</taxon>
    </lineage>
</organism>
<comment type="function">
    <text evidence="3">Inhibits voltage-gated potassium channels (IC(50)=405.0 nM for rKCNA1/Kv1.1, IC(50)=0.03 nM for rKCNA2/Kv1.2, IC(50)=1.31 nM for rKCNA6/Kv1.6, IC(50)=74.11 nM for hKCNA3/Kv1.3, and IC(50)=247.69 nM for insect Shaker IR). Binds the Shaker IR channels in a voltage-independent manner.</text>
</comment>
<comment type="subcellular location">
    <subcellularLocation>
        <location evidence="3">Secreted</location>
    </subcellularLocation>
    <subcellularLocation>
        <location evidence="3">Nematocyst</location>
    </subcellularLocation>
</comment>
<comment type="mass spectrometry"/>
<comment type="miscellaneous">
    <text evidence="3">No cytolytic activity on erythrocytes detected. Not active on rKv1.4/KCNA4 and rKv1.5/KCNA5 channels.</text>
</comment>
<comment type="similarity">
    <text evidence="5">Belongs to the sea anemone type 1 potassium channel toxin family. Type 1b subfamily.</text>
</comment>
<proteinExistence type="evidence at protein level"/>